<proteinExistence type="inferred from homology"/>
<reference key="1">
    <citation type="submission" date="2005-08" db="EMBL/GenBank/DDBJ databases">
        <title>Complete sequence of chromosome 1 of Nitrosospira multiformis ATCC 25196.</title>
        <authorList>
            <person name="Copeland A."/>
            <person name="Lucas S."/>
            <person name="Lapidus A."/>
            <person name="Barry K."/>
            <person name="Detter J.C."/>
            <person name="Glavina T."/>
            <person name="Hammon N."/>
            <person name="Israni S."/>
            <person name="Pitluck S."/>
            <person name="Chain P."/>
            <person name="Malfatti S."/>
            <person name="Shin M."/>
            <person name="Vergez L."/>
            <person name="Schmutz J."/>
            <person name="Larimer F."/>
            <person name="Land M."/>
            <person name="Hauser L."/>
            <person name="Kyrpides N."/>
            <person name="Lykidis A."/>
            <person name="Richardson P."/>
        </authorList>
    </citation>
    <scope>NUCLEOTIDE SEQUENCE [LARGE SCALE GENOMIC DNA]</scope>
    <source>
        <strain>ATCC 25196 / NCIMB 11849 / C 71</strain>
    </source>
</reference>
<gene>
    <name evidence="1" type="primary">rpsJ</name>
    <name type="ordered locus">Nmul_A0766</name>
</gene>
<evidence type="ECO:0000255" key="1">
    <source>
        <dbReference type="HAMAP-Rule" id="MF_00508"/>
    </source>
</evidence>
<evidence type="ECO:0000305" key="2"/>
<sequence length="102" mass="11711">MQSQKIRIRLKAFDYRLIDKSALEIVETAKRTGAVVKGPVPLPTRIERFDVLRSPHVNKTSRDQFEIRTHLRLMDIMDPTDKTVDALMKLDLPAGVDVEIKL</sequence>
<comment type="function">
    <text evidence="1">Involved in the binding of tRNA to the ribosomes.</text>
</comment>
<comment type="subunit">
    <text evidence="1">Part of the 30S ribosomal subunit.</text>
</comment>
<comment type="similarity">
    <text evidence="1">Belongs to the universal ribosomal protein uS10 family.</text>
</comment>
<protein>
    <recommendedName>
        <fullName evidence="1">Small ribosomal subunit protein uS10</fullName>
    </recommendedName>
    <alternativeName>
        <fullName evidence="2">30S ribosomal protein S10</fullName>
    </alternativeName>
</protein>
<organism>
    <name type="scientific">Nitrosospira multiformis (strain ATCC 25196 / NCIMB 11849 / C 71)</name>
    <dbReference type="NCBI Taxonomy" id="323848"/>
    <lineage>
        <taxon>Bacteria</taxon>
        <taxon>Pseudomonadati</taxon>
        <taxon>Pseudomonadota</taxon>
        <taxon>Betaproteobacteria</taxon>
        <taxon>Nitrosomonadales</taxon>
        <taxon>Nitrosomonadaceae</taxon>
        <taxon>Nitrosospira</taxon>
    </lineage>
</organism>
<feature type="chain" id="PRO_0000237071" description="Small ribosomal subunit protein uS10">
    <location>
        <begin position="1"/>
        <end position="102"/>
    </location>
</feature>
<keyword id="KW-1185">Reference proteome</keyword>
<keyword id="KW-0687">Ribonucleoprotein</keyword>
<keyword id="KW-0689">Ribosomal protein</keyword>
<name>RS10_NITMU</name>
<accession>Q2YAZ8</accession>
<dbReference type="EMBL" id="CP000103">
    <property type="protein sequence ID" value="ABB74073.1"/>
    <property type="molecule type" value="Genomic_DNA"/>
</dbReference>
<dbReference type="RefSeq" id="WP_011380122.1">
    <property type="nucleotide sequence ID" value="NC_007614.1"/>
</dbReference>
<dbReference type="SMR" id="Q2YAZ8"/>
<dbReference type="STRING" id="323848.Nmul_A0766"/>
<dbReference type="KEGG" id="nmu:Nmul_A0766"/>
<dbReference type="eggNOG" id="COG0051">
    <property type="taxonomic scope" value="Bacteria"/>
</dbReference>
<dbReference type="HOGENOM" id="CLU_122625_1_3_4"/>
<dbReference type="OrthoDB" id="9804464at2"/>
<dbReference type="Proteomes" id="UP000002718">
    <property type="component" value="Chromosome"/>
</dbReference>
<dbReference type="GO" id="GO:1990904">
    <property type="term" value="C:ribonucleoprotein complex"/>
    <property type="evidence" value="ECO:0007669"/>
    <property type="project" value="UniProtKB-KW"/>
</dbReference>
<dbReference type="GO" id="GO:0005840">
    <property type="term" value="C:ribosome"/>
    <property type="evidence" value="ECO:0007669"/>
    <property type="project" value="UniProtKB-KW"/>
</dbReference>
<dbReference type="GO" id="GO:0003735">
    <property type="term" value="F:structural constituent of ribosome"/>
    <property type="evidence" value="ECO:0007669"/>
    <property type="project" value="InterPro"/>
</dbReference>
<dbReference type="GO" id="GO:0000049">
    <property type="term" value="F:tRNA binding"/>
    <property type="evidence" value="ECO:0007669"/>
    <property type="project" value="UniProtKB-UniRule"/>
</dbReference>
<dbReference type="GO" id="GO:0006412">
    <property type="term" value="P:translation"/>
    <property type="evidence" value="ECO:0007669"/>
    <property type="project" value="UniProtKB-UniRule"/>
</dbReference>
<dbReference type="FunFam" id="3.30.70.600:FF:000001">
    <property type="entry name" value="30S ribosomal protein S10"/>
    <property type="match status" value="1"/>
</dbReference>
<dbReference type="Gene3D" id="3.30.70.600">
    <property type="entry name" value="Ribosomal protein S10 domain"/>
    <property type="match status" value="1"/>
</dbReference>
<dbReference type="HAMAP" id="MF_00508">
    <property type="entry name" value="Ribosomal_uS10"/>
    <property type="match status" value="1"/>
</dbReference>
<dbReference type="InterPro" id="IPR001848">
    <property type="entry name" value="Ribosomal_uS10"/>
</dbReference>
<dbReference type="InterPro" id="IPR018268">
    <property type="entry name" value="Ribosomal_uS10_CS"/>
</dbReference>
<dbReference type="InterPro" id="IPR027486">
    <property type="entry name" value="Ribosomal_uS10_dom"/>
</dbReference>
<dbReference type="InterPro" id="IPR036838">
    <property type="entry name" value="Ribosomal_uS10_dom_sf"/>
</dbReference>
<dbReference type="NCBIfam" id="NF001861">
    <property type="entry name" value="PRK00596.1"/>
    <property type="match status" value="1"/>
</dbReference>
<dbReference type="NCBIfam" id="TIGR01049">
    <property type="entry name" value="rpsJ_bact"/>
    <property type="match status" value="1"/>
</dbReference>
<dbReference type="PANTHER" id="PTHR11700">
    <property type="entry name" value="30S RIBOSOMAL PROTEIN S10 FAMILY MEMBER"/>
    <property type="match status" value="1"/>
</dbReference>
<dbReference type="Pfam" id="PF00338">
    <property type="entry name" value="Ribosomal_S10"/>
    <property type="match status" value="1"/>
</dbReference>
<dbReference type="PRINTS" id="PR00971">
    <property type="entry name" value="RIBOSOMALS10"/>
</dbReference>
<dbReference type="SMART" id="SM01403">
    <property type="entry name" value="Ribosomal_S10"/>
    <property type="match status" value="1"/>
</dbReference>
<dbReference type="SUPFAM" id="SSF54999">
    <property type="entry name" value="Ribosomal protein S10"/>
    <property type="match status" value="1"/>
</dbReference>
<dbReference type="PROSITE" id="PS00361">
    <property type="entry name" value="RIBOSOMAL_S10"/>
    <property type="match status" value="1"/>
</dbReference>